<proteinExistence type="inferred from homology"/>
<name>RNH3_STAA3</name>
<reference key="1">
    <citation type="journal article" date="2006" name="Lancet">
        <title>Complete genome sequence of USA300, an epidemic clone of community-acquired meticillin-resistant Staphylococcus aureus.</title>
        <authorList>
            <person name="Diep B.A."/>
            <person name="Gill S.R."/>
            <person name="Chang R.F."/>
            <person name="Phan T.H."/>
            <person name="Chen J.H."/>
            <person name="Davidson M.G."/>
            <person name="Lin F."/>
            <person name="Lin J."/>
            <person name="Carleton H.A."/>
            <person name="Mongodin E.F."/>
            <person name="Sensabaugh G.F."/>
            <person name="Perdreau-Remington F."/>
        </authorList>
    </citation>
    <scope>NUCLEOTIDE SEQUENCE [LARGE SCALE GENOMIC DNA]</scope>
    <source>
        <strain>USA300</strain>
    </source>
</reference>
<comment type="function">
    <text evidence="1">Endonuclease that specifically degrades the RNA of RNA-DNA hybrids.</text>
</comment>
<comment type="catalytic activity">
    <reaction evidence="1">
        <text>Endonucleolytic cleavage to 5'-phosphomonoester.</text>
        <dbReference type="EC" id="3.1.26.4"/>
    </reaction>
</comment>
<comment type="cofactor">
    <cofactor evidence="1">
        <name>Mn(2+)</name>
        <dbReference type="ChEBI" id="CHEBI:29035"/>
    </cofactor>
    <cofactor evidence="1">
        <name>Mg(2+)</name>
        <dbReference type="ChEBI" id="CHEBI:18420"/>
    </cofactor>
    <text evidence="1">Manganese or magnesium. Binds 1 divalent metal ion per monomer in the absence of substrate. May bind a second metal ion after substrate binding.</text>
</comment>
<comment type="subcellular location">
    <subcellularLocation>
        <location evidence="1">Cytoplasm</location>
    </subcellularLocation>
</comment>
<comment type="similarity">
    <text evidence="1">Belongs to the RNase HII family. RnhC subfamily.</text>
</comment>
<dbReference type="EC" id="3.1.26.4" evidence="1"/>
<dbReference type="EMBL" id="CP000255">
    <property type="protein sequence ID" value="ABD21598.1"/>
    <property type="molecule type" value="Genomic_DNA"/>
</dbReference>
<dbReference type="RefSeq" id="WP_001284258.1">
    <property type="nucleotide sequence ID" value="NZ_CP027476.1"/>
</dbReference>
<dbReference type="SMR" id="Q2FHU1"/>
<dbReference type="KEGG" id="saa:SAUSA300_1039"/>
<dbReference type="HOGENOM" id="CLU_059546_1_0_9"/>
<dbReference type="Proteomes" id="UP000001939">
    <property type="component" value="Chromosome"/>
</dbReference>
<dbReference type="GO" id="GO:0005737">
    <property type="term" value="C:cytoplasm"/>
    <property type="evidence" value="ECO:0007669"/>
    <property type="project" value="UniProtKB-SubCell"/>
</dbReference>
<dbReference type="GO" id="GO:0032299">
    <property type="term" value="C:ribonuclease H2 complex"/>
    <property type="evidence" value="ECO:0007669"/>
    <property type="project" value="TreeGrafter"/>
</dbReference>
<dbReference type="GO" id="GO:0000287">
    <property type="term" value="F:magnesium ion binding"/>
    <property type="evidence" value="ECO:0007669"/>
    <property type="project" value="UniProtKB-UniRule"/>
</dbReference>
<dbReference type="GO" id="GO:0003723">
    <property type="term" value="F:RNA binding"/>
    <property type="evidence" value="ECO:0007669"/>
    <property type="project" value="InterPro"/>
</dbReference>
<dbReference type="GO" id="GO:0004523">
    <property type="term" value="F:RNA-DNA hybrid ribonuclease activity"/>
    <property type="evidence" value="ECO:0007669"/>
    <property type="project" value="UniProtKB-UniRule"/>
</dbReference>
<dbReference type="GO" id="GO:0043137">
    <property type="term" value="P:DNA replication, removal of RNA primer"/>
    <property type="evidence" value="ECO:0007669"/>
    <property type="project" value="TreeGrafter"/>
</dbReference>
<dbReference type="GO" id="GO:0006298">
    <property type="term" value="P:mismatch repair"/>
    <property type="evidence" value="ECO:0007669"/>
    <property type="project" value="TreeGrafter"/>
</dbReference>
<dbReference type="CDD" id="cd06590">
    <property type="entry name" value="RNase_HII_bacteria_HIII_like"/>
    <property type="match status" value="1"/>
</dbReference>
<dbReference type="CDD" id="cd14796">
    <property type="entry name" value="RNAse_HIII_N"/>
    <property type="match status" value="1"/>
</dbReference>
<dbReference type="FunFam" id="3.30.420.10:FF:000047">
    <property type="entry name" value="Ribonuclease HIII"/>
    <property type="match status" value="1"/>
</dbReference>
<dbReference type="Gene3D" id="3.30.420.10">
    <property type="entry name" value="Ribonuclease H-like superfamily/Ribonuclease H"/>
    <property type="match status" value="1"/>
</dbReference>
<dbReference type="Gene3D" id="3.30.310.10">
    <property type="entry name" value="TATA-Binding Protein"/>
    <property type="match status" value="1"/>
</dbReference>
<dbReference type="HAMAP" id="MF_00053">
    <property type="entry name" value="RNase_HIII"/>
    <property type="match status" value="1"/>
</dbReference>
<dbReference type="InterPro" id="IPR001352">
    <property type="entry name" value="RNase_HII/HIII"/>
</dbReference>
<dbReference type="InterPro" id="IPR024567">
    <property type="entry name" value="RNase_HII/HIII_dom"/>
</dbReference>
<dbReference type="InterPro" id="IPR004641">
    <property type="entry name" value="RNase_HIII"/>
</dbReference>
<dbReference type="InterPro" id="IPR024568">
    <property type="entry name" value="RNase_HIII_N"/>
</dbReference>
<dbReference type="InterPro" id="IPR012337">
    <property type="entry name" value="RNaseH-like_sf"/>
</dbReference>
<dbReference type="InterPro" id="IPR036397">
    <property type="entry name" value="RNaseH_sf"/>
</dbReference>
<dbReference type="InterPro" id="IPR012295">
    <property type="entry name" value="TBP_dom_sf"/>
</dbReference>
<dbReference type="NCBIfam" id="TIGR00716">
    <property type="entry name" value="rnhC"/>
    <property type="match status" value="1"/>
</dbReference>
<dbReference type="PANTHER" id="PTHR10954:SF23">
    <property type="entry name" value="RIBONUCLEASE"/>
    <property type="match status" value="1"/>
</dbReference>
<dbReference type="PANTHER" id="PTHR10954">
    <property type="entry name" value="RIBONUCLEASE H2 SUBUNIT A"/>
    <property type="match status" value="1"/>
</dbReference>
<dbReference type="Pfam" id="PF11858">
    <property type="entry name" value="DUF3378"/>
    <property type="match status" value="1"/>
</dbReference>
<dbReference type="Pfam" id="PF01351">
    <property type="entry name" value="RNase_HII"/>
    <property type="match status" value="1"/>
</dbReference>
<dbReference type="PIRSF" id="PIRSF037748">
    <property type="entry name" value="RnhC"/>
    <property type="match status" value="1"/>
</dbReference>
<dbReference type="SUPFAM" id="SSF53098">
    <property type="entry name" value="Ribonuclease H-like"/>
    <property type="match status" value="1"/>
</dbReference>
<dbReference type="PROSITE" id="PS51975">
    <property type="entry name" value="RNASE_H_2"/>
    <property type="match status" value="1"/>
</dbReference>
<keyword id="KW-0963">Cytoplasm</keyword>
<keyword id="KW-0255">Endonuclease</keyword>
<keyword id="KW-0378">Hydrolase</keyword>
<keyword id="KW-0460">Magnesium</keyword>
<keyword id="KW-0479">Metal-binding</keyword>
<keyword id="KW-0540">Nuclease</keyword>
<feature type="chain" id="PRO_1000031236" description="Ribonuclease HIII">
    <location>
        <begin position="1"/>
        <end position="312"/>
    </location>
</feature>
<feature type="domain" description="RNase H type-2" evidence="2">
    <location>
        <begin position="95"/>
        <end position="311"/>
    </location>
</feature>
<feature type="binding site" evidence="1">
    <location>
        <position position="101"/>
    </location>
    <ligand>
        <name>a divalent metal cation</name>
        <dbReference type="ChEBI" id="CHEBI:60240"/>
    </ligand>
</feature>
<feature type="binding site" evidence="1">
    <location>
        <position position="102"/>
    </location>
    <ligand>
        <name>a divalent metal cation</name>
        <dbReference type="ChEBI" id="CHEBI:60240"/>
    </ligand>
</feature>
<feature type="binding site" evidence="1">
    <location>
        <position position="206"/>
    </location>
    <ligand>
        <name>a divalent metal cation</name>
        <dbReference type="ChEBI" id="CHEBI:60240"/>
    </ligand>
</feature>
<organism>
    <name type="scientific">Staphylococcus aureus (strain USA300)</name>
    <dbReference type="NCBI Taxonomy" id="367830"/>
    <lineage>
        <taxon>Bacteria</taxon>
        <taxon>Bacillati</taxon>
        <taxon>Bacillota</taxon>
        <taxon>Bacilli</taxon>
        <taxon>Bacillales</taxon>
        <taxon>Staphylococcaceae</taxon>
        <taxon>Staphylococcus</taxon>
    </lineage>
</organism>
<accession>Q2FHU1</accession>
<sequence length="312" mass="35055">MANIVFKLSDKDITTLMSRISFDTENLPQGMKARAKYQNTTVNIYQSGKVMFQGNHAEAVSEELLPQHSQLNTNKTKKKNMANSFLEQTLMYDQFNCIGSDEAGSGDYFGPLTVCAAFVTKEHVPILKTLGVDDSKKLTDTKIVELAEQLVTFIPHSLLTLHNEKYNIQQAKGWTQVKMKAALHNEAIKNVLEKIDSSQLDYIVIDQFAKREVYSHYALSDIPLPKKTKFETKGESKSLAIAVASIISRYAFVTYMDQISKNINMTIPKGAGAKVDVIAAKIIKKYGLSRLDTISKKHFKNREKAQKILKPL</sequence>
<evidence type="ECO:0000255" key="1">
    <source>
        <dbReference type="HAMAP-Rule" id="MF_00053"/>
    </source>
</evidence>
<evidence type="ECO:0000255" key="2">
    <source>
        <dbReference type="PROSITE-ProRule" id="PRU01319"/>
    </source>
</evidence>
<protein>
    <recommendedName>
        <fullName evidence="1">Ribonuclease HIII</fullName>
        <shortName evidence="1">RNase HIII</shortName>
        <ecNumber evidence="1">3.1.26.4</ecNumber>
    </recommendedName>
</protein>
<gene>
    <name evidence="1" type="primary">rnhC</name>
    <name type="ordered locus">SAUSA300_1039</name>
</gene>